<evidence type="ECO:0000255" key="1">
    <source>
        <dbReference type="HAMAP-Rule" id="MF_00472"/>
    </source>
</evidence>
<proteinExistence type="inferred from homology"/>
<gene>
    <name evidence="1" type="primary">ubiG</name>
    <name type="ordered locus">ECDH10B_2391</name>
</gene>
<keyword id="KW-0489">Methyltransferase</keyword>
<keyword id="KW-0949">S-adenosyl-L-methionine</keyword>
<keyword id="KW-0808">Transferase</keyword>
<keyword id="KW-0831">Ubiquinone biosynthesis</keyword>
<dbReference type="EC" id="2.1.1.222" evidence="1"/>
<dbReference type="EC" id="2.1.1.64" evidence="1"/>
<dbReference type="EMBL" id="CP000948">
    <property type="protein sequence ID" value="ACB03392.1"/>
    <property type="molecule type" value="Genomic_DNA"/>
</dbReference>
<dbReference type="RefSeq" id="WP_000990765.1">
    <property type="nucleotide sequence ID" value="NC_010473.1"/>
</dbReference>
<dbReference type="SMR" id="B1X8C6"/>
<dbReference type="GeneID" id="75206477"/>
<dbReference type="KEGG" id="ecd:ECDH10B_2391"/>
<dbReference type="HOGENOM" id="CLU_042432_5_0_6"/>
<dbReference type="UniPathway" id="UPA00232"/>
<dbReference type="GO" id="GO:0102208">
    <property type="term" value="F:2-polyprenyl-6-hydroxyphenol methylase activity"/>
    <property type="evidence" value="ECO:0007669"/>
    <property type="project" value="UniProtKB-EC"/>
</dbReference>
<dbReference type="GO" id="GO:0061542">
    <property type="term" value="F:3-demethylubiquinol 3-O-methyltransferase activity"/>
    <property type="evidence" value="ECO:0007669"/>
    <property type="project" value="UniProtKB-UniRule"/>
</dbReference>
<dbReference type="GO" id="GO:0010420">
    <property type="term" value="F:polyprenyldihydroxybenzoate methyltransferase activity"/>
    <property type="evidence" value="ECO:0007669"/>
    <property type="project" value="InterPro"/>
</dbReference>
<dbReference type="GO" id="GO:0032259">
    <property type="term" value="P:methylation"/>
    <property type="evidence" value="ECO:0007669"/>
    <property type="project" value="UniProtKB-KW"/>
</dbReference>
<dbReference type="CDD" id="cd02440">
    <property type="entry name" value="AdoMet_MTases"/>
    <property type="match status" value="1"/>
</dbReference>
<dbReference type="FunFam" id="3.40.50.150:FF:000028">
    <property type="entry name" value="Ubiquinone biosynthesis O-methyltransferase"/>
    <property type="match status" value="1"/>
</dbReference>
<dbReference type="Gene3D" id="3.40.50.150">
    <property type="entry name" value="Vaccinia Virus protein VP39"/>
    <property type="match status" value="1"/>
</dbReference>
<dbReference type="HAMAP" id="MF_00472">
    <property type="entry name" value="UbiG"/>
    <property type="match status" value="1"/>
</dbReference>
<dbReference type="InterPro" id="IPR029063">
    <property type="entry name" value="SAM-dependent_MTases_sf"/>
</dbReference>
<dbReference type="InterPro" id="IPR010233">
    <property type="entry name" value="UbiG_MeTrfase"/>
</dbReference>
<dbReference type="NCBIfam" id="TIGR01983">
    <property type="entry name" value="UbiG"/>
    <property type="match status" value="1"/>
</dbReference>
<dbReference type="PANTHER" id="PTHR43464">
    <property type="entry name" value="METHYLTRANSFERASE"/>
    <property type="match status" value="1"/>
</dbReference>
<dbReference type="PANTHER" id="PTHR43464:SF19">
    <property type="entry name" value="UBIQUINONE BIOSYNTHESIS O-METHYLTRANSFERASE, MITOCHONDRIAL"/>
    <property type="match status" value="1"/>
</dbReference>
<dbReference type="Pfam" id="PF13489">
    <property type="entry name" value="Methyltransf_23"/>
    <property type="match status" value="1"/>
</dbReference>
<dbReference type="SUPFAM" id="SSF53335">
    <property type="entry name" value="S-adenosyl-L-methionine-dependent methyltransferases"/>
    <property type="match status" value="1"/>
</dbReference>
<organism>
    <name type="scientific">Escherichia coli (strain K12 / DH10B)</name>
    <dbReference type="NCBI Taxonomy" id="316385"/>
    <lineage>
        <taxon>Bacteria</taxon>
        <taxon>Pseudomonadati</taxon>
        <taxon>Pseudomonadota</taxon>
        <taxon>Gammaproteobacteria</taxon>
        <taxon>Enterobacterales</taxon>
        <taxon>Enterobacteriaceae</taxon>
        <taxon>Escherichia</taxon>
    </lineage>
</organism>
<feature type="chain" id="PRO_1000199678" description="Ubiquinone biosynthesis O-methyltransferase">
    <location>
        <begin position="1"/>
        <end position="240"/>
    </location>
</feature>
<feature type="binding site" evidence="1">
    <location>
        <position position="44"/>
    </location>
    <ligand>
        <name>S-adenosyl-L-methionine</name>
        <dbReference type="ChEBI" id="CHEBI:59789"/>
    </ligand>
</feature>
<feature type="binding site" evidence="1">
    <location>
        <position position="64"/>
    </location>
    <ligand>
        <name>S-adenosyl-L-methionine</name>
        <dbReference type="ChEBI" id="CHEBI:59789"/>
    </ligand>
</feature>
<feature type="binding site" evidence="1">
    <location>
        <position position="85"/>
    </location>
    <ligand>
        <name>S-adenosyl-L-methionine</name>
        <dbReference type="ChEBI" id="CHEBI:59789"/>
    </ligand>
</feature>
<feature type="binding site" evidence="1">
    <location>
        <position position="129"/>
    </location>
    <ligand>
        <name>S-adenosyl-L-methionine</name>
        <dbReference type="ChEBI" id="CHEBI:59789"/>
    </ligand>
</feature>
<reference key="1">
    <citation type="journal article" date="2008" name="J. Bacteriol.">
        <title>The complete genome sequence of Escherichia coli DH10B: insights into the biology of a laboratory workhorse.</title>
        <authorList>
            <person name="Durfee T."/>
            <person name="Nelson R."/>
            <person name="Baldwin S."/>
            <person name="Plunkett G. III"/>
            <person name="Burland V."/>
            <person name="Mau B."/>
            <person name="Petrosino J.F."/>
            <person name="Qin X."/>
            <person name="Muzny D.M."/>
            <person name="Ayele M."/>
            <person name="Gibbs R.A."/>
            <person name="Csorgo B."/>
            <person name="Posfai G."/>
            <person name="Weinstock G.M."/>
            <person name="Blattner F.R."/>
        </authorList>
    </citation>
    <scope>NUCLEOTIDE SEQUENCE [LARGE SCALE GENOMIC DNA]</scope>
    <source>
        <strain>K12 / DH10B</strain>
    </source>
</reference>
<sequence length="240" mass="26555">MNAEKSPVNHNVDHEEIAKFEAVASRWWDLEGEFKPLHRINPLRLGYIAERAGGLFGKKVLDVGCGGGILAESMAREGATVTGLDMGFEPLQVAKLHALESGIQVDYVQETVEEHAAKHAGQYDVVTCMEMLEHVPDPQSVVRACAQLVKPGGDVFFSTLNRNGKSWLMAVVGAEYILRMVPKGTHDVKKFIKPAELLGWVDQTSLKERHITGLHYNPITNTFKLGPGVDVNYMLHTQNK</sequence>
<accession>B1X8C6</accession>
<comment type="function">
    <text evidence="1">O-methyltransferase that catalyzes the 2 O-methylation steps in the ubiquinone biosynthetic pathway.</text>
</comment>
<comment type="catalytic activity">
    <reaction evidence="1">
        <text>a 3-demethylubiquinol + S-adenosyl-L-methionine = a ubiquinol + S-adenosyl-L-homocysteine + H(+)</text>
        <dbReference type="Rhea" id="RHEA:44380"/>
        <dbReference type="Rhea" id="RHEA-COMP:9566"/>
        <dbReference type="Rhea" id="RHEA-COMP:10914"/>
        <dbReference type="ChEBI" id="CHEBI:15378"/>
        <dbReference type="ChEBI" id="CHEBI:17976"/>
        <dbReference type="ChEBI" id="CHEBI:57856"/>
        <dbReference type="ChEBI" id="CHEBI:59789"/>
        <dbReference type="ChEBI" id="CHEBI:84422"/>
        <dbReference type="EC" id="2.1.1.64"/>
    </reaction>
</comment>
<comment type="catalytic activity">
    <reaction evidence="1">
        <text>a 3-(all-trans-polyprenyl)benzene-1,2-diol + S-adenosyl-L-methionine = a 2-methoxy-6-(all-trans-polyprenyl)phenol + S-adenosyl-L-homocysteine + H(+)</text>
        <dbReference type="Rhea" id="RHEA:31411"/>
        <dbReference type="Rhea" id="RHEA-COMP:9550"/>
        <dbReference type="Rhea" id="RHEA-COMP:9551"/>
        <dbReference type="ChEBI" id="CHEBI:15378"/>
        <dbReference type="ChEBI" id="CHEBI:57856"/>
        <dbReference type="ChEBI" id="CHEBI:59789"/>
        <dbReference type="ChEBI" id="CHEBI:62729"/>
        <dbReference type="ChEBI" id="CHEBI:62731"/>
        <dbReference type="EC" id="2.1.1.222"/>
    </reaction>
</comment>
<comment type="pathway">
    <text evidence="1">Cofactor biosynthesis; ubiquinone biosynthesis.</text>
</comment>
<comment type="similarity">
    <text evidence="1">Belongs to the methyltransferase superfamily. UbiG/COQ3 family.</text>
</comment>
<protein>
    <recommendedName>
        <fullName evidence="1">Ubiquinone biosynthesis O-methyltransferase</fullName>
    </recommendedName>
    <alternativeName>
        <fullName evidence="1">2-octaprenyl-6-hydroxyphenol methylase</fullName>
        <ecNumber evidence="1">2.1.1.222</ecNumber>
    </alternativeName>
    <alternativeName>
        <fullName evidence="1">3-demethylubiquinone-8 3-O-methyltransferase</fullName>
        <ecNumber evidence="1">2.1.1.64</ecNumber>
    </alternativeName>
</protein>
<name>UBIG_ECODH</name>